<proteinExistence type="inferred from homology"/>
<dbReference type="EMBL" id="AP006840">
    <property type="protein sequence ID" value="BAD39098.1"/>
    <property type="molecule type" value="Genomic_DNA"/>
</dbReference>
<dbReference type="RefSeq" id="WP_011194248.1">
    <property type="nucleotide sequence ID" value="NC_006177.1"/>
</dbReference>
<dbReference type="SMR" id="Q67T95"/>
<dbReference type="STRING" id="292459.STH113"/>
<dbReference type="KEGG" id="sth:STH113"/>
<dbReference type="eggNOG" id="COG0522">
    <property type="taxonomic scope" value="Bacteria"/>
</dbReference>
<dbReference type="HOGENOM" id="CLU_092403_0_1_9"/>
<dbReference type="OrthoDB" id="9803672at2"/>
<dbReference type="Proteomes" id="UP000000417">
    <property type="component" value="Chromosome"/>
</dbReference>
<dbReference type="GO" id="GO:0015935">
    <property type="term" value="C:small ribosomal subunit"/>
    <property type="evidence" value="ECO:0007669"/>
    <property type="project" value="InterPro"/>
</dbReference>
<dbReference type="GO" id="GO:0019843">
    <property type="term" value="F:rRNA binding"/>
    <property type="evidence" value="ECO:0007669"/>
    <property type="project" value="UniProtKB-UniRule"/>
</dbReference>
<dbReference type="GO" id="GO:0003735">
    <property type="term" value="F:structural constituent of ribosome"/>
    <property type="evidence" value="ECO:0007669"/>
    <property type="project" value="InterPro"/>
</dbReference>
<dbReference type="GO" id="GO:0042274">
    <property type="term" value="P:ribosomal small subunit biogenesis"/>
    <property type="evidence" value="ECO:0007669"/>
    <property type="project" value="TreeGrafter"/>
</dbReference>
<dbReference type="GO" id="GO:0006412">
    <property type="term" value="P:translation"/>
    <property type="evidence" value="ECO:0007669"/>
    <property type="project" value="UniProtKB-UniRule"/>
</dbReference>
<dbReference type="CDD" id="cd00165">
    <property type="entry name" value="S4"/>
    <property type="match status" value="1"/>
</dbReference>
<dbReference type="FunFam" id="3.10.290.10:FF:000001">
    <property type="entry name" value="30S ribosomal protein S4"/>
    <property type="match status" value="1"/>
</dbReference>
<dbReference type="Gene3D" id="1.10.1050.10">
    <property type="entry name" value="Ribosomal Protein S4 Delta 41, Chain A, domain 1"/>
    <property type="match status" value="1"/>
</dbReference>
<dbReference type="Gene3D" id="3.10.290.10">
    <property type="entry name" value="RNA-binding S4 domain"/>
    <property type="match status" value="1"/>
</dbReference>
<dbReference type="HAMAP" id="MF_01306_B">
    <property type="entry name" value="Ribosomal_uS4_B"/>
    <property type="match status" value="1"/>
</dbReference>
<dbReference type="InterPro" id="IPR022801">
    <property type="entry name" value="Ribosomal_uS4"/>
</dbReference>
<dbReference type="InterPro" id="IPR005709">
    <property type="entry name" value="Ribosomal_uS4_bac-type"/>
</dbReference>
<dbReference type="InterPro" id="IPR018079">
    <property type="entry name" value="Ribosomal_uS4_CS"/>
</dbReference>
<dbReference type="InterPro" id="IPR001912">
    <property type="entry name" value="Ribosomal_uS4_N"/>
</dbReference>
<dbReference type="InterPro" id="IPR002942">
    <property type="entry name" value="S4_RNA-bd"/>
</dbReference>
<dbReference type="InterPro" id="IPR036986">
    <property type="entry name" value="S4_RNA-bd_sf"/>
</dbReference>
<dbReference type="NCBIfam" id="NF003717">
    <property type="entry name" value="PRK05327.1"/>
    <property type="match status" value="1"/>
</dbReference>
<dbReference type="NCBIfam" id="TIGR01017">
    <property type="entry name" value="rpsD_bact"/>
    <property type="match status" value="1"/>
</dbReference>
<dbReference type="PANTHER" id="PTHR11831">
    <property type="entry name" value="30S 40S RIBOSOMAL PROTEIN"/>
    <property type="match status" value="1"/>
</dbReference>
<dbReference type="PANTHER" id="PTHR11831:SF4">
    <property type="entry name" value="SMALL RIBOSOMAL SUBUNIT PROTEIN US4M"/>
    <property type="match status" value="1"/>
</dbReference>
<dbReference type="Pfam" id="PF00163">
    <property type="entry name" value="Ribosomal_S4"/>
    <property type="match status" value="1"/>
</dbReference>
<dbReference type="Pfam" id="PF01479">
    <property type="entry name" value="S4"/>
    <property type="match status" value="1"/>
</dbReference>
<dbReference type="SMART" id="SM01390">
    <property type="entry name" value="Ribosomal_S4"/>
    <property type="match status" value="1"/>
</dbReference>
<dbReference type="SMART" id="SM00363">
    <property type="entry name" value="S4"/>
    <property type="match status" value="1"/>
</dbReference>
<dbReference type="SUPFAM" id="SSF55174">
    <property type="entry name" value="Alpha-L RNA-binding motif"/>
    <property type="match status" value="1"/>
</dbReference>
<dbReference type="PROSITE" id="PS00632">
    <property type="entry name" value="RIBOSOMAL_S4"/>
    <property type="match status" value="1"/>
</dbReference>
<dbReference type="PROSITE" id="PS50889">
    <property type="entry name" value="S4"/>
    <property type="match status" value="1"/>
</dbReference>
<gene>
    <name evidence="1" type="primary">rpsD2</name>
    <name type="synonym">rpsD</name>
    <name type="ordered locus">STH113</name>
</gene>
<comment type="function">
    <text evidence="1">One of the primary rRNA binding proteins, it binds directly to 16S rRNA where it nucleates assembly of the body of the 30S subunit.</text>
</comment>
<comment type="function">
    <text evidence="1">With S5 and S12 plays an important role in translational accuracy.</text>
</comment>
<comment type="subunit">
    <text evidence="1">Part of the 30S ribosomal subunit. Contacts protein S5. The interaction surface between S4 and S5 is involved in control of translational fidelity.</text>
</comment>
<comment type="similarity">
    <text evidence="1">Belongs to the universal ribosomal protein uS4 family.</text>
</comment>
<sequence length="201" mass="22874">MARYIGPKHKLCRRVGRPLCGSAKCPALKRPYRPGQHGPGRPQKLSEYGAQLLEKQKLRFIYGVMERQFRRYFEQAQRSRGVTGEVLLQLLEQRLDTVVYRLGFARTMAAARQLVGHGHVTLNGRRVDIASCQVKPGDVVGLTQKARSLAVVRESLDLRRPVPPYLSLDETTMTSRLQRLPLREEIPVDVDESLVVELYAR</sequence>
<evidence type="ECO:0000255" key="1">
    <source>
        <dbReference type="HAMAP-Rule" id="MF_01306"/>
    </source>
</evidence>
<evidence type="ECO:0000305" key="2"/>
<reference key="1">
    <citation type="journal article" date="2004" name="Nucleic Acids Res.">
        <title>Genome sequence of Symbiobacterium thermophilum, an uncultivable bacterium that depends on microbial commensalism.</title>
        <authorList>
            <person name="Ueda K."/>
            <person name="Yamashita A."/>
            <person name="Ishikawa J."/>
            <person name="Shimada M."/>
            <person name="Watsuji T."/>
            <person name="Morimura K."/>
            <person name="Ikeda H."/>
            <person name="Hattori M."/>
            <person name="Beppu T."/>
        </authorList>
    </citation>
    <scope>NUCLEOTIDE SEQUENCE [LARGE SCALE GENOMIC DNA]</scope>
    <source>
        <strain>DSM 24528 / JCM 14929 / IAM 14863 / T</strain>
    </source>
</reference>
<keyword id="KW-1185">Reference proteome</keyword>
<keyword id="KW-0687">Ribonucleoprotein</keyword>
<keyword id="KW-0689">Ribosomal protein</keyword>
<keyword id="KW-0694">RNA-binding</keyword>
<keyword id="KW-0699">rRNA-binding</keyword>
<feature type="chain" id="PRO_0000228932" description="Small ribosomal subunit protein uS4B">
    <location>
        <begin position="1"/>
        <end position="201"/>
    </location>
</feature>
<feature type="domain" description="S4 RNA-binding" evidence="1">
    <location>
        <begin position="93"/>
        <end position="156"/>
    </location>
</feature>
<accession>Q67T95</accession>
<name>RS4B_SYMTH</name>
<organism>
    <name type="scientific">Symbiobacterium thermophilum (strain DSM 24528 / JCM 14929 / IAM 14863 / T)</name>
    <dbReference type="NCBI Taxonomy" id="292459"/>
    <lineage>
        <taxon>Bacteria</taxon>
        <taxon>Bacillati</taxon>
        <taxon>Bacillota</taxon>
        <taxon>Clostridia</taxon>
        <taxon>Eubacteriales</taxon>
        <taxon>Symbiobacteriaceae</taxon>
        <taxon>Symbiobacterium</taxon>
    </lineage>
</organism>
<protein>
    <recommendedName>
        <fullName evidence="1">Small ribosomal subunit protein uS4B</fullName>
    </recommendedName>
    <alternativeName>
        <fullName evidence="2">30S ribosomal protein S4 2</fullName>
    </alternativeName>
</protein>